<sequence>MASTAKEGSELTLAVIGCGTMGIAILSGILASLDEIHAPNSQSSETDETPSKLPTKFIACVRSPKGAEKIKKALSPYKTPVKIIQSDNVTACREADVVLLGCKPYMAEGILGEEGMVDALKGKLLISILAGVPAEQIYGYMYGKTPVNPEKEGLCQVVRAMPNTASGIRESMTVIATSSPPLSATTSSLITWIFKRIGDVVQLPAATMDASTALCGSGPAFFALILEAAIDGAVAMGLPRAEAQRMAAQTMKGAAGLVLSGEHPALLKDKVTTPGGCTIGGLMVLEEGGVRGTVARAVREATVVASQLGKGVQGVNGTRF</sequence>
<gene>
    <name type="primary">P5CR</name>
</gene>
<reference key="1">
    <citation type="journal article" date="1996" name="Gene">
        <title>Isolation and sequence analysis of the cDNA encoding delta 1-pyrroline-5-carboxylate reductase from Zalerion arboricola.</title>
        <authorList>
            <person name="Kelly R."/>
            <person name="Register E."/>
        </authorList>
    </citation>
    <scope>NUCLEOTIDE SEQUENCE [MRNA]</scope>
    <source>
        <strain>ATCC 20868 / MF5171</strain>
    </source>
</reference>
<dbReference type="EC" id="1.5.1.2"/>
<dbReference type="EMBL" id="U33266">
    <property type="protein sequence ID" value="AAC49320.1"/>
    <property type="molecule type" value="mRNA"/>
</dbReference>
<dbReference type="PIR" id="JC4830">
    <property type="entry name" value="JC4830"/>
</dbReference>
<dbReference type="SMR" id="Q12740"/>
<dbReference type="UniPathway" id="UPA00098">
    <property type="reaction ID" value="UER00361"/>
</dbReference>
<dbReference type="GO" id="GO:0004735">
    <property type="term" value="F:pyrroline-5-carboxylate reductase activity"/>
    <property type="evidence" value="ECO:0007669"/>
    <property type="project" value="UniProtKB-EC"/>
</dbReference>
<dbReference type="GO" id="GO:0055129">
    <property type="term" value="P:L-proline biosynthetic process"/>
    <property type="evidence" value="ECO:0007669"/>
    <property type="project" value="UniProtKB-UniPathway"/>
</dbReference>
<dbReference type="FunFam" id="1.10.3730.10:FF:000001">
    <property type="entry name" value="Pyrroline-5-carboxylate reductase"/>
    <property type="match status" value="1"/>
</dbReference>
<dbReference type="Gene3D" id="3.40.50.720">
    <property type="entry name" value="NAD(P)-binding Rossmann-like Domain"/>
    <property type="match status" value="1"/>
</dbReference>
<dbReference type="Gene3D" id="1.10.3730.10">
    <property type="entry name" value="ProC C-terminal domain-like"/>
    <property type="match status" value="1"/>
</dbReference>
<dbReference type="HAMAP" id="MF_01925">
    <property type="entry name" value="P5C_reductase"/>
    <property type="match status" value="1"/>
</dbReference>
<dbReference type="InterPro" id="IPR008927">
    <property type="entry name" value="6-PGluconate_DH-like_C_sf"/>
</dbReference>
<dbReference type="InterPro" id="IPR036291">
    <property type="entry name" value="NAD(P)-bd_dom_sf"/>
</dbReference>
<dbReference type="InterPro" id="IPR028939">
    <property type="entry name" value="P5C_Rdtase_cat_N"/>
</dbReference>
<dbReference type="InterPro" id="IPR053790">
    <property type="entry name" value="P5CR-like_CS"/>
</dbReference>
<dbReference type="InterPro" id="IPR029036">
    <property type="entry name" value="P5CR_dimer"/>
</dbReference>
<dbReference type="InterPro" id="IPR000304">
    <property type="entry name" value="Pyrroline-COOH_reductase"/>
</dbReference>
<dbReference type="NCBIfam" id="TIGR00112">
    <property type="entry name" value="proC"/>
    <property type="match status" value="1"/>
</dbReference>
<dbReference type="PANTHER" id="PTHR11645">
    <property type="entry name" value="PYRROLINE-5-CARBOXYLATE REDUCTASE"/>
    <property type="match status" value="1"/>
</dbReference>
<dbReference type="PANTHER" id="PTHR11645:SF0">
    <property type="entry name" value="PYRROLINE-5-CARBOXYLATE REDUCTASE 3"/>
    <property type="match status" value="1"/>
</dbReference>
<dbReference type="Pfam" id="PF03807">
    <property type="entry name" value="F420_oxidored"/>
    <property type="match status" value="1"/>
</dbReference>
<dbReference type="Pfam" id="PF14748">
    <property type="entry name" value="P5CR_dimer"/>
    <property type="match status" value="1"/>
</dbReference>
<dbReference type="PIRSF" id="PIRSF000193">
    <property type="entry name" value="Pyrrol-5-carb_rd"/>
    <property type="match status" value="1"/>
</dbReference>
<dbReference type="SUPFAM" id="SSF48179">
    <property type="entry name" value="6-phosphogluconate dehydrogenase C-terminal domain-like"/>
    <property type="match status" value="1"/>
</dbReference>
<dbReference type="SUPFAM" id="SSF51735">
    <property type="entry name" value="NAD(P)-binding Rossmann-fold domains"/>
    <property type="match status" value="1"/>
</dbReference>
<dbReference type="PROSITE" id="PS00521">
    <property type="entry name" value="P5CR"/>
    <property type="match status" value="1"/>
</dbReference>
<feature type="chain" id="PRO_0000187329" description="Pyrroline-5-carboxylate reductase">
    <location>
        <begin position="1"/>
        <end position="320"/>
    </location>
</feature>
<proteinExistence type="evidence at transcript level"/>
<name>P5CR_LOPAR</name>
<comment type="catalytic activity">
    <reaction>
        <text>L-proline + NADP(+) = (S)-1-pyrroline-5-carboxylate + NADPH + 2 H(+)</text>
        <dbReference type="Rhea" id="RHEA:14109"/>
        <dbReference type="ChEBI" id="CHEBI:15378"/>
        <dbReference type="ChEBI" id="CHEBI:17388"/>
        <dbReference type="ChEBI" id="CHEBI:57783"/>
        <dbReference type="ChEBI" id="CHEBI:58349"/>
        <dbReference type="ChEBI" id="CHEBI:60039"/>
        <dbReference type="EC" id="1.5.1.2"/>
    </reaction>
</comment>
<comment type="catalytic activity">
    <reaction>
        <text>L-proline + NAD(+) = (S)-1-pyrroline-5-carboxylate + NADH + 2 H(+)</text>
        <dbReference type="Rhea" id="RHEA:14105"/>
        <dbReference type="ChEBI" id="CHEBI:15378"/>
        <dbReference type="ChEBI" id="CHEBI:17388"/>
        <dbReference type="ChEBI" id="CHEBI:57540"/>
        <dbReference type="ChEBI" id="CHEBI:57945"/>
        <dbReference type="ChEBI" id="CHEBI:60039"/>
        <dbReference type="EC" id="1.5.1.2"/>
    </reaction>
</comment>
<comment type="pathway">
    <text>Amino-acid biosynthesis; L-proline biosynthesis; L-proline from L-glutamate 5-semialdehyde: step 1/1.</text>
</comment>
<comment type="similarity">
    <text evidence="1">Belongs to the pyrroline-5-carboxylate reductase family.</text>
</comment>
<accession>Q12740</accession>
<organism>
    <name type="scientific">Lophium arboricola</name>
    <name type="common">Zalerion arboricola</name>
    <dbReference type="NCBI Taxonomy" id="42465"/>
    <lineage>
        <taxon>Eukaryota</taxon>
        <taxon>Fungi</taxon>
        <taxon>Dikarya</taxon>
        <taxon>Ascomycota</taxon>
        <taxon>Pezizomycotina</taxon>
        <taxon>Dothideomycetes</taxon>
        <taxon>Pleosporomycetidae</taxon>
        <taxon>Mytilinidiales</taxon>
        <taxon>Mytilinidiaceae</taxon>
        <taxon>Lophium</taxon>
    </lineage>
</organism>
<evidence type="ECO:0000305" key="1"/>
<protein>
    <recommendedName>
        <fullName>Pyrroline-5-carboxylate reductase</fullName>
        <shortName>P5C reductase</shortName>
        <shortName>P5CR</shortName>
        <ecNumber>1.5.1.2</ecNumber>
    </recommendedName>
</protein>
<keyword id="KW-0028">Amino-acid biosynthesis</keyword>
<keyword id="KW-0521">NADP</keyword>
<keyword id="KW-0560">Oxidoreductase</keyword>
<keyword id="KW-0641">Proline biosynthesis</keyword>